<gene>
    <name type="ordered locus">Shew_1420</name>
</gene>
<feature type="chain" id="PRO_1000069028" description="Probable phosphatase Shew_1420">
    <location>
        <begin position="1"/>
        <end position="247"/>
    </location>
</feature>
<feature type="binding site" evidence="1">
    <location>
        <position position="8"/>
    </location>
    <ligand>
        <name>Zn(2+)</name>
        <dbReference type="ChEBI" id="CHEBI:29105"/>
        <label>1</label>
    </ligand>
</feature>
<feature type="binding site" evidence="1">
    <location>
        <position position="10"/>
    </location>
    <ligand>
        <name>Zn(2+)</name>
        <dbReference type="ChEBI" id="CHEBI:29105"/>
        <label>1</label>
    </ligand>
</feature>
<feature type="binding site" evidence="1">
    <location>
        <position position="16"/>
    </location>
    <ligand>
        <name>Zn(2+)</name>
        <dbReference type="ChEBI" id="CHEBI:29105"/>
        <label>2</label>
    </ligand>
</feature>
<feature type="binding site" evidence="1">
    <location>
        <position position="41"/>
    </location>
    <ligand>
        <name>Zn(2+)</name>
        <dbReference type="ChEBI" id="CHEBI:29105"/>
        <label>2</label>
    </ligand>
</feature>
<feature type="binding site" evidence="1">
    <location>
        <position position="74"/>
    </location>
    <ligand>
        <name>Zn(2+)</name>
        <dbReference type="ChEBI" id="CHEBI:29105"/>
        <label>1</label>
    </ligand>
</feature>
<feature type="binding site" evidence="1">
    <location>
        <position position="74"/>
    </location>
    <ligand>
        <name>Zn(2+)</name>
        <dbReference type="ChEBI" id="CHEBI:29105"/>
        <label>3</label>
    </ligand>
</feature>
<feature type="binding site" evidence="1">
    <location>
        <position position="102"/>
    </location>
    <ligand>
        <name>Zn(2+)</name>
        <dbReference type="ChEBI" id="CHEBI:29105"/>
        <label>3</label>
    </ligand>
</feature>
<feature type="binding site" evidence="1">
    <location>
        <position position="132"/>
    </location>
    <ligand>
        <name>Zn(2+)</name>
        <dbReference type="ChEBI" id="CHEBI:29105"/>
        <label>3</label>
    </ligand>
</feature>
<feature type="binding site" evidence="1">
    <location>
        <position position="193"/>
    </location>
    <ligand>
        <name>Zn(2+)</name>
        <dbReference type="ChEBI" id="CHEBI:29105"/>
        <label>1</label>
    </ligand>
</feature>
<feature type="binding site" evidence="1">
    <location>
        <position position="195"/>
    </location>
    <ligand>
        <name>Zn(2+)</name>
        <dbReference type="ChEBI" id="CHEBI:29105"/>
        <label>2</label>
    </ligand>
</feature>
<accession>A3QCT9</accession>
<reference key="1">
    <citation type="submission" date="2007-03" db="EMBL/GenBank/DDBJ databases">
        <title>Complete sequence of Shewanella loihica PV-4.</title>
        <authorList>
            <consortium name="US DOE Joint Genome Institute"/>
            <person name="Copeland A."/>
            <person name="Lucas S."/>
            <person name="Lapidus A."/>
            <person name="Barry K."/>
            <person name="Detter J.C."/>
            <person name="Glavina del Rio T."/>
            <person name="Hammon N."/>
            <person name="Israni S."/>
            <person name="Dalin E."/>
            <person name="Tice H."/>
            <person name="Pitluck S."/>
            <person name="Chain P."/>
            <person name="Malfatti S."/>
            <person name="Shin M."/>
            <person name="Vergez L."/>
            <person name="Schmutz J."/>
            <person name="Larimer F."/>
            <person name="Land M."/>
            <person name="Hauser L."/>
            <person name="Kyrpides N."/>
            <person name="Mikhailova N."/>
            <person name="Romine M.F."/>
            <person name="Serres G."/>
            <person name="Fredrickson J."/>
            <person name="Tiedje J."/>
            <person name="Richardson P."/>
        </authorList>
    </citation>
    <scope>NUCLEOTIDE SEQUENCE [LARGE SCALE GENOMIC DNA]</scope>
    <source>
        <strain>ATCC BAA-1088 / PV-4</strain>
    </source>
</reference>
<evidence type="ECO:0000255" key="1">
    <source>
        <dbReference type="HAMAP-Rule" id="MF_01561"/>
    </source>
</evidence>
<sequence>MKFLVDVHAHTIASTHAYSTVHDYLAVAKEKGIKLFAITDHGPDMADAPHFWHFVNMRVLPRIVDGIGVLRGIEANIKNENGDIDFFGSYLNELDIVLAGFHEPVFQPSTQTTHTQALVNCIESGNVDIISHPGNPAYPIDIKRVAEVAATHNVALEINNSSFLTSRKGSLKNCTAIARAVKEAGGYLVLGSDSHVAFSLGGFDKAIELIQEVDFPIERILNHSPKALLEFLTSRGHKGMDEYAEIV</sequence>
<protein>
    <recommendedName>
        <fullName evidence="1">Probable phosphatase Shew_1420</fullName>
        <ecNumber evidence="1">3.1.3.-</ecNumber>
    </recommendedName>
</protein>
<organism>
    <name type="scientific">Shewanella loihica (strain ATCC BAA-1088 / PV-4)</name>
    <dbReference type="NCBI Taxonomy" id="323850"/>
    <lineage>
        <taxon>Bacteria</taxon>
        <taxon>Pseudomonadati</taxon>
        <taxon>Pseudomonadota</taxon>
        <taxon>Gammaproteobacteria</taxon>
        <taxon>Alteromonadales</taxon>
        <taxon>Shewanellaceae</taxon>
        <taxon>Shewanella</taxon>
    </lineage>
</organism>
<name>Y1420_SHELP</name>
<keyword id="KW-0378">Hydrolase</keyword>
<keyword id="KW-0479">Metal-binding</keyword>
<keyword id="KW-1185">Reference proteome</keyword>
<keyword id="KW-0862">Zinc</keyword>
<dbReference type="EC" id="3.1.3.-" evidence="1"/>
<dbReference type="EMBL" id="CP000606">
    <property type="protein sequence ID" value="ABO23287.1"/>
    <property type="molecule type" value="Genomic_DNA"/>
</dbReference>
<dbReference type="RefSeq" id="WP_011865219.1">
    <property type="nucleotide sequence ID" value="NC_009092.1"/>
</dbReference>
<dbReference type="SMR" id="A3QCT9"/>
<dbReference type="STRING" id="323850.Shew_1420"/>
<dbReference type="KEGG" id="slo:Shew_1420"/>
<dbReference type="eggNOG" id="COG1387">
    <property type="taxonomic scope" value="Bacteria"/>
</dbReference>
<dbReference type="HOGENOM" id="CLU_061999_0_1_6"/>
<dbReference type="OrthoDB" id="9808747at2"/>
<dbReference type="Proteomes" id="UP000001558">
    <property type="component" value="Chromosome"/>
</dbReference>
<dbReference type="GO" id="GO:0005829">
    <property type="term" value="C:cytosol"/>
    <property type="evidence" value="ECO:0007669"/>
    <property type="project" value="TreeGrafter"/>
</dbReference>
<dbReference type="GO" id="GO:0016791">
    <property type="term" value="F:phosphatase activity"/>
    <property type="evidence" value="ECO:0007669"/>
    <property type="project" value="UniProtKB-UniRule"/>
</dbReference>
<dbReference type="GO" id="GO:0008270">
    <property type="term" value="F:zinc ion binding"/>
    <property type="evidence" value="ECO:0007669"/>
    <property type="project" value="UniProtKB-UniRule"/>
</dbReference>
<dbReference type="GO" id="GO:0071978">
    <property type="term" value="P:bacterial-type flagellum-dependent swarming motility"/>
    <property type="evidence" value="ECO:0007669"/>
    <property type="project" value="TreeGrafter"/>
</dbReference>
<dbReference type="CDD" id="cd07437">
    <property type="entry name" value="PHP_HisPPase_Ycdx_like"/>
    <property type="match status" value="1"/>
</dbReference>
<dbReference type="FunFam" id="3.20.20.140:FF:000008">
    <property type="entry name" value="Probable phosphatase YcdX"/>
    <property type="match status" value="1"/>
</dbReference>
<dbReference type="Gene3D" id="3.20.20.140">
    <property type="entry name" value="Metal-dependent hydrolases"/>
    <property type="match status" value="1"/>
</dbReference>
<dbReference type="HAMAP" id="MF_01561">
    <property type="entry name" value="YcdX_phosphat"/>
    <property type="match status" value="1"/>
</dbReference>
<dbReference type="InterPro" id="IPR023710">
    <property type="entry name" value="Phosphatase_YcdX_put"/>
</dbReference>
<dbReference type="InterPro" id="IPR004013">
    <property type="entry name" value="PHP_dom"/>
</dbReference>
<dbReference type="InterPro" id="IPR050243">
    <property type="entry name" value="PHP_phosphatase"/>
</dbReference>
<dbReference type="InterPro" id="IPR003141">
    <property type="entry name" value="Pol/His_phosphatase_N"/>
</dbReference>
<dbReference type="InterPro" id="IPR016195">
    <property type="entry name" value="Pol/histidinol_Pase-like"/>
</dbReference>
<dbReference type="NCBIfam" id="NF006702">
    <property type="entry name" value="PRK09248.1"/>
    <property type="match status" value="1"/>
</dbReference>
<dbReference type="PANTHER" id="PTHR36928">
    <property type="entry name" value="PHOSPHATASE YCDX-RELATED"/>
    <property type="match status" value="1"/>
</dbReference>
<dbReference type="PANTHER" id="PTHR36928:SF1">
    <property type="entry name" value="PHOSPHATASE YCDX-RELATED"/>
    <property type="match status" value="1"/>
</dbReference>
<dbReference type="Pfam" id="PF02811">
    <property type="entry name" value="PHP"/>
    <property type="match status" value="1"/>
</dbReference>
<dbReference type="SMART" id="SM00481">
    <property type="entry name" value="POLIIIAc"/>
    <property type="match status" value="1"/>
</dbReference>
<dbReference type="SUPFAM" id="SSF89550">
    <property type="entry name" value="PHP domain-like"/>
    <property type="match status" value="1"/>
</dbReference>
<proteinExistence type="inferred from homology"/>
<comment type="cofactor">
    <cofactor evidence="1">
        <name>Zn(2+)</name>
        <dbReference type="ChEBI" id="CHEBI:29105"/>
    </cofactor>
    <text evidence="1">Binds 3 Zn(2+) ions per subunit.</text>
</comment>
<comment type="similarity">
    <text evidence="1">Belongs to the PHP family.</text>
</comment>